<organism>
    <name type="scientific">Cancer pagurus</name>
    <name type="common">Rock crab</name>
    <dbReference type="NCBI Taxonomy" id="6755"/>
    <lineage>
        <taxon>Eukaryota</taxon>
        <taxon>Metazoa</taxon>
        <taxon>Ecdysozoa</taxon>
        <taxon>Arthropoda</taxon>
        <taxon>Crustacea</taxon>
        <taxon>Multicrustacea</taxon>
        <taxon>Malacostraca</taxon>
        <taxon>Eumalacostraca</taxon>
        <taxon>Eucarida</taxon>
        <taxon>Decapoda</taxon>
        <taxon>Pleocyemata</taxon>
        <taxon>Brachyura</taxon>
        <taxon>Eubrachyura</taxon>
        <taxon>Cancroidea</taxon>
        <taxon>Cancridae</taxon>
        <taxon>Cancer</taxon>
    </lineage>
</organism>
<accession>P81584</accession>
<sequence>LIPDDPDVAAEKARFFRTFKIIEGASKPRGGGIAVRPALPPGADVYTMPRPQPKWMGPLASKVPASLPGSTAFVSETSDVQNARSHFFNTYNAQVAATMPSPDSPTYYYSPSAPAYVPDAPQEKWTGPLASAVPAGLPGSSPVVFDTPEVYNAKAAFFNTYKNQVKAIIPRPSYF</sequence>
<proteinExistence type="evidence at protein level"/>
<keyword id="KW-0193">Cuticle</keyword>
<keyword id="KW-0903">Direct protein sequencing</keyword>
<name>CUPC5_CANPG</name>
<reference key="1">
    <citation type="journal article" date="1999" name="Comp. Biochem. Physiol.">
        <title>Exoskeletal proteins from the crab, Cancer pagurus.</title>
        <authorList>
            <person name="Andersen S.O."/>
        </authorList>
    </citation>
    <scope>PROTEIN SEQUENCE</scope>
    <scope>MASS SPECTROMETRY</scope>
    <source>
        <tissue>Carapace cuticle</tissue>
    </source>
</reference>
<protein>
    <recommendedName>
        <fullName>Cuticle protein CP1876</fullName>
        <shortName>CPCP1876</shortName>
    </recommendedName>
</protein>
<evidence type="ECO:0000269" key="1">
    <source>
    </source>
</evidence>
<dbReference type="GO" id="GO:0042302">
    <property type="term" value="F:structural constituent of cuticle"/>
    <property type="evidence" value="ECO:0007669"/>
    <property type="project" value="UniProtKB-KW"/>
</dbReference>
<feature type="chain" id="PRO_0000196165" description="Cuticle protein CP1876">
    <location>
        <begin position="1"/>
        <end position="175"/>
    </location>
</feature>
<comment type="tissue specificity">
    <text>Calcified shell.</text>
</comment>
<comment type="mass spectrometry"/>